<protein>
    <recommendedName>
        <fullName>Zinc finger MYND domain-containing protein 10</fullName>
    </recommendedName>
    <alternativeName>
        <fullName>Protein BLu</fullName>
    </alternativeName>
</protein>
<reference key="1">
    <citation type="submission" date="2001-01" db="EMBL/GenBank/DDBJ databases">
        <title>A mouse locus containing the ortholog of the human RASSF1 tumor suppressor gene.</title>
        <authorList>
            <person name="Dammann R."/>
            <person name="Pfeifer G.P."/>
        </authorList>
    </citation>
    <scope>NUCLEOTIDE SEQUENCE [GENOMIC DNA]</scope>
    <source>
        <strain>129/SvImJ</strain>
    </source>
</reference>
<reference key="2">
    <citation type="journal article" date="2005" name="Science">
        <title>The transcriptional landscape of the mammalian genome.</title>
        <authorList>
            <person name="Carninci P."/>
            <person name="Kasukawa T."/>
            <person name="Katayama S."/>
            <person name="Gough J."/>
            <person name="Frith M.C."/>
            <person name="Maeda N."/>
            <person name="Oyama R."/>
            <person name="Ravasi T."/>
            <person name="Lenhard B."/>
            <person name="Wells C."/>
            <person name="Kodzius R."/>
            <person name="Shimokawa K."/>
            <person name="Bajic V.B."/>
            <person name="Brenner S.E."/>
            <person name="Batalov S."/>
            <person name="Forrest A.R."/>
            <person name="Zavolan M."/>
            <person name="Davis M.J."/>
            <person name="Wilming L.G."/>
            <person name="Aidinis V."/>
            <person name="Allen J.E."/>
            <person name="Ambesi-Impiombato A."/>
            <person name="Apweiler R."/>
            <person name="Aturaliya R.N."/>
            <person name="Bailey T.L."/>
            <person name="Bansal M."/>
            <person name="Baxter L."/>
            <person name="Beisel K.W."/>
            <person name="Bersano T."/>
            <person name="Bono H."/>
            <person name="Chalk A.M."/>
            <person name="Chiu K.P."/>
            <person name="Choudhary V."/>
            <person name="Christoffels A."/>
            <person name="Clutterbuck D.R."/>
            <person name="Crowe M.L."/>
            <person name="Dalla E."/>
            <person name="Dalrymple B.P."/>
            <person name="de Bono B."/>
            <person name="Della Gatta G."/>
            <person name="di Bernardo D."/>
            <person name="Down T."/>
            <person name="Engstrom P."/>
            <person name="Fagiolini M."/>
            <person name="Faulkner G."/>
            <person name="Fletcher C.F."/>
            <person name="Fukushima T."/>
            <person name="Furuno M."/>
            <person name="Futaki S."/>
            <person name="Gariboldi M."/>
            <person name="Georgii-Hemming P."/>
            <person name="Gingeras T.R."/>
            <person name="Gojobori T."/>
            <person name="Green R.E."/>
            <person name="Gustincich S."/>
            <person name="Harbers M."/>
            <person name="Hayashi Y."/>
            <person name="Hensch T.K."/>
            <person name="Hirokawa N."/>
            <person name="Hill D."/>
            <person name="Huminiecki L."/>
            <person name="Iacono M."/>
            <person name="Ikeo K."/>
            <person name="Iwama A."/>
            <person name="Ishikawa T."/>
            <person name="Jakt M."/>
            <person name="Kanapin A."/>
            <person name="Katoh M."/>
            <person name="Kawasawa Y."/>
            <person name="Kelso J."/>
            <person name="Kitamura H."/>
            <person name="Kitano H."/>
            <person name="Kollias G."/>
            <person name="Krishnan S.P."/>
            <person name="Kruger A."/>
            <person name="Kummerfeld S.K."/>
            <person name="Kurochkin I.V."/>
            <person name="Lareau L.F."/>
            <person name="Lazarevic D."/>
            <person name="Lipovich L."/>
            <person name="Liu J."/>
            <person name="Liuni S."/>
            <person name="McWilliam S."/>
            <person name="Madan Babu M."/>
            <person name="Madera M."/>
            <person name="Marchionni L."/>
            <person name="Matsuda H."/>
            <person name="Matsuzawa S."/>
            <person name="Miki H."/>
            <person name="Mignone F."/>
            <person name="Miyake S."/>
            <person name="Morris K."/>
            <person name="Mottagui-Tabar S."/>
            <person name="Mulder N."/>
            <person name="Nakano N."/>
            <person name="Nakauchi H."/>
            <person name="Ng P."/>
            <person name="Nilsson R."/>
            <person name="Nishiguchi S."/>
            <person name="Nishikawa S."/>
            <person name="Nori F."/>
            <person name="Ohara O."/>
            <person name="Okazaki Y."/>
            <person name="Orlando V."/>
            <person name="Pang K.C."/>
            <person name="Pavan W.J."/>
            <person name="Pavesi G."/>
            <person name="Pesole G."/>
            <person name="Petrovsky N."/>
            <person name="Piazza S."/>
            <person name="Reed J."/>
            <person name="Reid J.F."/>
            <person name="Ring B.Z."/>
            <person name="Ringwald M."/>
            <person name="Rost B."/>
            <person name="Ruan Y."/>
            <person name="Salzberg S.L."/>
            <person name="Sandelin A."/>
            <person name="Schneider C."/>
            <person name="Schoenbach C."/>
            <person name="Sekiguchi K."/>
            <person name="Semple C.A."/>
            <person name="Seno S."/>
            <person name="Sessa L."/>
            <person name="Sheng Y."/>
            <person name="Shibata Y."/>
            <person name="Shimada H."/>
            <person name="Shimada K."/>
            <person name="Silva D."/>
            <person name="Sinclair B."/>
            <person name="Sperling S."/>
            <person name="Stupka E."/>
            <person name="Sugiura K."/>
            <person name="Sultana R."/>
            <person name="Takenaka Y."/>
            <person name="Taki K."/>
            <person name="Tammoja K."/>
            <person name="Tan S.L."/>
            <person name="Tang S."/>
            <person name="Taylor M.S."/>
            <person name="Tegner J."/>
            <person name="Teichmann S.A."/>
            <person name="Ueda H.R."/>
            <person name="van Nimwegen E."/>
            <person name="Verardo R."/>
            <person name="Wei C.L."/>
            <person name="Yagi K."/>
            <person name="Yamanishi H."/>
            <person name="Zabarovsky E."/>
            <person name="Zhu S."/>
            <person name="Zimmer A."/>
            <person name="Hide W."/>
            <person name="Bult C."/>
            <person name="Grimmond S.M."/>
            <person name="Teasdale R.D."/>
            <person name="Liu E.T."/>
            <person name="Brusic V."/>
            <person name="Quackenbush J."/>
            <person name="Wahlestedt C."/>
            <person name="Mattick J.S."/>
            <person name="Hume D.A."/>
            <person name="Kai C."/>
            <person name="Sasaki D."/>
            <person name="Tomaru Y."/>
            <person name="Fukuda S."/>
            <person name="Kanamori-Katayama M."/>
            <person name="Suzuki M."/>
            <person name="Aoki J."/>
            <person name="Arakawa T."/>
            <person name="Iida J."/>
            <person name="Imamura K."/>
            <person name="Itoh M."/>
            <person name="Kato T."/>
            <person name="Kawaji H."/>
            <person name="Kawagashira N."/>
            <person name="Kawashima T."/>
            <person name="Kojima M."/>
            <person name="Kondo S."/>
            <person name="Konno H."/>
            <person name="Nakano K."/>
            <person name="Ninomiya N."/>
            <person name="Nishio T."/>
            <person name="Okada M."/>
            <person name="Plessy C."/>
            <person name="Shibata K."/>
            <person name="Shiraki T."/>
            <person name="Suzuki S."/>
            <person name="Tagami M."/>
            <person name="Waki K."/>
            <person name="Watahiki A."/>
            <person name="Okamura-Oho Y."/>
            <person name="Suzuki H."/>
            <person name="Kawai J."/>
            <person name="Hayashizaki Y."/>
        </authorList>
    </citation>
    <scope>NUCLEOTIDE SEQUENCE [LARGE SCALE MRNA]</scope>
    <source>
        <strain>C57BL/6J</strain>
        <tissue>Head</tissue>
    </source>
</reference>
<reference key="3">
    <citation type="submission" date="2005-07" db="EMBL/GenBank/DDBJ databases">
        <authorList>
            <person name="Mural R.J."/>
            <person name="Adams M.D."/>
            <person name="Myers E.W."/>
            <person name="Smith H.O."/>
            <person name="Venter J.C."/>
        </authorList>
    </citation>
    <scope>NUCLEOTIDE SEQUENCE [LARGE SCALE GENOMIC DNA]</scope>
</reference>
<reference key="4">
    <citation type="journal article" date="2004" name="Genome Res.">
        <title>The status, quality, and expansion of the NIH full-length cDNA project: the Mammalian Gene Collection (MGC).</title>
        <authorList>
            <consortium name="The MGC Project Team"/>
        </authorList>
    </citation>
    <scope>NUCLEOTIDE SEQUENCE [LARGE SCALE MRNA]</scope>
    <source>
        <tissue>Testis</tissue>
    </source>
</reference>
<reference key="5">
    <citation type="journal article" date="2010" name="Cell">
        <title>A tissue-specific atlas of mouse protein phosphorylation and expression.</title>
        <authorList>
            <person name="Huttlin E.L."/>
            <person name="Jedrychowski M.P."/>
            <person name="Elias J.E."/>
            <person name="Goswami T."/>
            <person name="Rad R."/>
            <person name="Beausoleil S.A."/>
            <person name="Villen J."/>
            <person name="Haas W."/>
            <person name="Sowa M.E."/>
            <person name="Gygi S.P."/>
        </authorList>
    </citation>
    <scope>IDENTIFICATION BY MASS SPECTROMETRY [LARGE SCALE ANALYSIS]</scope>
    <source>
        <tissue>Testis</tissue>
    </source>
</reference>
<reference key="6">
    <citation type="journal article" date="2013" name="Am. J. Hum. Genet.">
        <title>Mutations in ZMYND10, a gene essential for proper axonemal assembly of inner and outer dynein arms in humans and flies, cause primary ciliary dyskinesia.</title>
        <authorList>
            <person name="Moore D.J."/>
            <person name="Onoufriadis A."/>
            <person name="Shoemark A."/>
            <person name="Simpson M.A."/>
            <person name="Zur Lage P.I."/>
            <person name="de Castro S.C."/>
            <person name="Bartoloni L."/>
            <person name="Gallone G."/>
            <person name="Petridi S."/>
            <person name="Woollard W.J."/>
            <person name="Antony D."/>
            <person name="Schmidts M."/>
            <person name="Didonna T."/>
            <person name="Makrythanasis P."/>
            <person name="Bevillard J."/>
            <person name="Mongan N.P."/>
            <person name="Djakow J."/>
            <person name="Pals G."/>
            <person name="Lucas J.S."/>
            <person name="Marthin J.K."/>
            <person name="Nielsen K.G."/>
            <person name="Santoni F."/>
            <person name="Guipponi M."/>
            <person name="Hogg C."/>
            <person name="Antonarakis S.E."/>
            <person name="Emes R.D."/>
            <person name="Chung E.M."/>
            <person name="Greene N.D."/>
            <person name="Blouin J.L."/>
            <person name="Jarman A.P."/>
            <person name="Mitchison H.M."/>
        </authorList>
    </citation>
    <scope>DEVELOPMENTAL STAGE</scope>
    <scope>TISSUE SPECIFICITY</scope>
</reference>
<reference key="7">
    <citation type="journal article" date="2018" name="PLoS Genet.">
        <title>ZMYND10 stabilizes intermediate chain proteins in the cytoplasmic pre-assembly of dynein arms.</title>
        <authorList>
            <person name="Cho K.J."/>
            <person name="Noh S.H."/>
            <person name="Han S.M."/>
            <person name="Choi W.I."/>
            <person name="Kim H.Y."/>
            <person name="Yu S."/>
            <person name="Lee J.S."/>
            <person name="Rim J.H."/>
            <person name="Lee M.G."/>
            <person name="Hildebrandt F."/>
            <person name="Gee H.Y."/>
        </authorList>
    </citation>
    <scope>FUNCTION</scope>
    <scope>SUBCELLULAR LOCATION</scope>
    <scope>TISSUE SPECIFICITY</scope>
    <scope>DISRUPTION PHENOTYPE</scope>
</reference>
<feature type="chain" id="PRO_0000218315" description="Zinc finger MYND domain-containing protein 10">
    <location>
        <begin position="1"/>
        <end position="440"/>
    </location>
</feature>
<feature type="zinc finger region" description="MYND-type" evidence="5">
    <location>
        <begin position="394"/>
        <end position="430"/>
    </location>
</feature>
<feature type="binding site" evidence="5">
    <location>
        <position position="394"/>
    </location>
    <ligand>
        <name>Zn(2+)</name>
        <dbReference type="ChEBI" id="CHEBI:29105"/>
        <label>1</label>
    </ligand>
</feature>
<feature type="binding site" evidence="5">
    <location>
        <position position="397"/>
    </location>
    <ligand>
        <name>Zn(2+)</name>
        <dbReference type="ChEBI" id="CHEBI:29105"/>
        <label>1</label>
    </ligand>
</feature>
<feature type="binding site" evidence="5">
    <location>
        <position position="405"/>
    </location>
    <ligand>
        <name>Zn(2+)</name>
        <dbReference type="ChEBI" id="CHEBI:29105"/>
        <label>2</label>
    </ligand>
</feature>
<feature type="binding site" evidence="5">
    <location>
        <position position="408"/>
    </location>
    <ligand>
        <name>Zn(2+)</name>
        <dbReference type="ChEBI" id="CHEBI:29105"/>
        <label>2</label>
    </ligand>
</feature>
<feature type="binding site" evidence="5">
    <location>
        <position position="414"/>
    </location>
    <ligand>
        <name>Zn(2+)</name>
        <dbReference type="ChEBI" id="CHEBI:29105"/>
        <label>1</label>
    </ligand>
</feature>
<feature type="binding site" evidence="5">
    <location>
        <position position="418"/>
    </location>
    <ligand>
        <name>Zn(2+)</name>
        <dbReference type="ChEBI" id="CHEBI:29105"/>
        <label>1</label>
    </ligand>
</feature>
<feature type="binding site" evidence="5">
    <location>
        <position position="426"/>
    </location>
    <ligand>
        <name>Zn(2+)</name>
        <dbReference type="ChEBI" id="CHEBI:29105"/>
        <label>2</label>
    </ligand>
</feature>
<feature type="binding site" evidence="5">
    <location>
        <position position="430"/>
    </location>
    <ligand>
        <name>Zn(2+)</name>
        <dbReference type="ChEBI" id="CHEBI:29105"/>
        <label>2</label>
    </ligand>
</feature>
<feature type="sequence conflict" description="In Ref. 1; AAK21199." evidence="8" ref="1">
    <original>I</original>
    <variation>V</variation>
    <location>
        <position position="63"/>
    </location>
</feature>
<gene>
    <name type="primary">Zmynd10</name>
    <name type="synonym">Blu</name>
</gene>
<sequence>MGDLELLLPGEAEVLVRGLRSFQLREMGSEGWNKQHESLEKLNMQAILDATISQAEPIQELLINHGKIPTLVEELIAVEMWKQKVFPVLCRLEDFKPQNTFPIYMVVHHEASIINLLETVFFHKEVCESADDKVLDLVDYCHRKLILLVARKGGGDLSEEEQFQDSTPMQELQKQAEMMEFEISLKALSVLRYITDCVDSLSLSTLNRMLRTHNLPCLLVELLEHSPWSRRVGGKLQHFESGRWQTVAPSEQQKLNKLDGQVWIALYNLLLSPEARARYCLTSFAKGQLLKLQAFLTDTLLDQLPNLADLKGFLAHLSLAETQPPKKDLVLEQIPEIWDRLERENKGKWQAIAKHQLQHVFSLSEKDLRQQAQRWAETYRLDVLEAVAPERPRCGYCNAEASKRCSRCQNVWYCCRECQVKHWEKHGKTCVLAAQGDRAK</sequence>
<accession>Q99ML0</accession>
<accession>Q3V1P0</accession>
<accession>Q80W73</accession>
<evidence type="ECO:0000250" key="1"/>
<evidence type="ECO:0000250" key="2">
    <source>
        <dbReference type="UniProtKB" id="O75800"/>
    </source>
</evidence>
<evidence type="ECO:0000250" key="3">
    <source>
        <dbReference type="UniProtKB" id="Q5FWU8"/>
    </source>
</evidence>
<evidence type="ECO:0000250" key="4">
    <source>
        <dbReference type="UniProtKB" id="Q6AXZ5"/>
    </source>
</evidence>
<evidence type="ECO:0000255" key="5">
    <source>
        <dbReference type="PROSITE-ProRule" id="PRU00134"/>
    </source>
</evidence>
<evidence type="ECO:0000269" key="6">
    <source>
    </source>
</evidence>
<evidence type="ECO:0000269" key="7">
    <source>
    </source>
</evidence>
<evidence type="ECO:0000305" key="8"/>
<name>ZMY10_MOUSE</name>
<organism>
    <name type="scientific">Mus musculus</name>
    <name type="common">Mouse</name>
    <dbReference type="NCBI Taxonomy" id="10090"/>
    <lineage>
        <taxon>Eukaryota</taxon>
        <taxon>Metazoa</taxon>
        <taxon>Chordata</taxon>
        <taxon>Craniata</taxon>
        <taxon>Vertebrata</taxon>
        <taxon>Euteleostomi</taxon>
        <taxon>Mammalia</taxon>
        <taxon>Eutheria</taxon>
        <taxon>Euarchontoglires</taxon>
        <taxon>Glires</taxon>
        <taxon>Rodentia</taxon>
        <taxon>Myomorpha</taxon>
        <taxon>Muroidea</taxon>
        <taxon>Muridae</taxon>
        <taxon>Murinae</taxon>
        <taxon>Mus</taxon>
        <taxon>Mus</taxon>
    </lineage>
</organism>
<proteinExistence type="evidence at protein level"/>
<dbReference type="EMBL" id="AF333027">
    <property type="protein sequence ID" value="AAK21199.1"/>
    <property type="molecule type" value="Genomic_DNA"/>
</dbReference>
<dbReference type="EMBL" id="AK132332">
    <property type="protein sequence ID" value="BAE21110.1"/>
    <property type="molecule type" value="mRNA"/>
</dbReference>
<dbReference type="EMBL" id="CH466560">
    <property type="protein sequence ID" value="EDL21195.1"/>
    <property type="molecule type" value="Genomic_DNA"/>
</dbReference>
<dbReference type="EMBL" id="BC052357">
    <property type="protein sequence ID" value="AAH52357.1"/>
    <property type="molecule type" value="mRNA"/>
</dbReference>
<dbReference type="CCDS" id="CCDS23493.1"/>
<dbReference type="RefSeq" id="NP_444483.2">
    <property type="nucleotide sequence ID" value="NM_053253.3"/>
</dbReference>
<dbReference type="SMR" id="Q99ML0"/>
<dbReference type="BioGRID" id="227760">
    <property type="interactions" value="2"/>
</dbReference>
<dbReference type="FunCoup" id="Q99ML0">
    <property type="interactions" value="109"/>
</dbReference>
<dbReference type="STRING" id="10090.ENSMUSP00000010188"/>
<dbReference type="iPTMnet" id="Q99ML0"/>
<dbReference type="PhosphoSitePlus" id="Q99ML0"/>
<dbReference type="SwissPalm" id="Q99ML0"/>
<dbReference type="PaxDb" id="10090-ENSMUSP00000010188"/>
<dbReference type="ProteomicsDB" id="274997"/>
<dbReference type="Antibodypedia" id="30915">
    <property type="antibodies" value="183 antibodies from 27 providers"/>
</dbReference>
<dbReference type="DNASU" id="114602"/>
<dbReference type="Ensembl" id="ENSMUST00000010188.9">
    <property type="protein sequence ID" value="ENSMUSP00000010188.8"/>
    <property type="gene ID" value="ENSMUSG00000010044.13"/>
</dbReference>
<dbReference type="GeneID" id="114602"/>
<dbReference type="KEGG" id="mmu:114602"/>
<dbReference type="UCSC" id="uc009rlo.1">
    <property type="organism name" value="mouse"/>
</dbReference>
<dbReference type="AGR" id="MGI:2387863"/>
<dbReference type="CTD" id="51364"/>
<dbReference type="MGI" id="MGI:2387863">
    <property type="gene designation" value="Zmynd10"/>
</dbReference>
<dbReference type="VEuPathDB" id="HostDB:ENSMUSG00000010044"/>
<dbReference type="eggNOG" id="ENOG502QS3F">
    <property type="taxonomic scope" value="Eukaryota"/>
</dbReference>
<dbReference type="GeneTree" id="ENSGT00940000153820"/>
<dbReference type="HOGENOM" id="CLU_034036_1_0_1"/>
<dbReference type="InParanoid" id="Q99ML0"/>
<dbReference type="OMA" id="LIHEAYC"/>
<dbReference type="OrthoDB" id="432970at2759"/>
<dbReference type="PhylomeDB" id="Q99ML0"/>
<dbReference type="TreeFam" id="TF324215"/>
<dbReference type="BioGRID-ORCS" id="114602">
    <property type="hits" value="5 hits in 78 CRISPR screens"/>
</dbReference>
<dbReference type="PRO" id="PR:Q99ML0"/>
<dbReference type="Proteomes" id="UP000000589">
    <property type="component" value="Chromosome 9"/>
</dbReference>
<dbReference type="RNAct" id="Q99ML0">
    <property type="molecule type" value="protein"/>
</dbReference>
<dbReference type="Bgee" id="ENSMUSG00000010044">
    <property type="expression patterns" value="Expressed in spermatocyte and 70 other cell types or tissues"/>
</dbReference>
<dbReference type="ExpressionAtlas" id="Q99ML0">
    <property type="expression patterns" value="baseline and differential"/>
</dbReference>
<dbReference type="GO" id="GO:0016324">
    <property type="term" value="C:apical plasma membrane"/>
    <property type="evidence" value="ECO:0000314"/>
    <property type="project" value="UniProtKB"/>
</dbReference>
<dbReference type="GO" id="GO:0034451">
    <property type="term" value="C:centriolar satellite"/>
    <property type="evidence" value="ECO:0000250"/>
    <property type="project" value="UniProtKB"/>
</dbReference>
<dbReference type="GO" id="GO:0005737">
    <property type="term" value="C:cytoplasm"/>
    <property type="evidence" value="ECO:0000314"/>
    <property type="project" value="MGI"/>
</dbReference>
<dbReference type="GO" id="GO:0120293">
    <property type="term" value="C:dynein axonemal particle"/>
    <property type="evidence" value="ECO:0000250"/>
    <property type="project" value="UniProtKB"/>
</dbReference>
<dbReference type="GO" id="GO:0060090">
    <property type="term" value="F:molecular adaptor activity"/>
    <property type="evidence" value="ECO:0000315"/>
    <property type="project" value="MGI"/>
</dbReference>
<dbReference type="GO" id="GO:0044183">
    <property type="term" value="F:protein folding chaperone"/>
    <property type="evidence" value="ECO:0000315"/>
    <property type="project" value="MGI"/>
</dbReference>
<dbReference type="GO" id="GO:0008270">
    <property type="term" value="F:zinc ion binding"/>
    <property type="evidence" value="ECO:0007669"/>
    <property type="project" value="UniProtKB-KW"/>
</dbReference>
<dbReference type="GO" id="GO:0003341">
    <property type="term" value="P:cilium movement"/>
    <property type="evidence" value="ECO:0000315"/>
    <property type="project" value="MGI"/>
</dbReference>
<dbReference type="GO" id="GO:0036159">
    <property type="term" value="P:inner dynein arm assembly"/>
    <property type="evidence" value="ECO:0000315"/>
    <property type="project" value="UniProtKB"/>
</dbReference>
<dbReference type="GO" id="GO:0044458">
    <property type="term" value="P:motile cilium assembly"/>
    <property type="evidence" value="ECO:0000315"/>
    <property type="project" value="MGI"/>
</dbReference>
<dbReference type="GO" id="GO:0036158">
    <property type="term" value="P:outer dynein arm assembly"/>
    <property type="evidence" value="ECO:0000315"/>
    <property type="project" value="UniProtKB"/>
</dbReference>
<dbReference type="GO" id="GO:1905505">
    <property type="term" value="P:positive regulation of motile cilium assembly"/>
    <property type="evidence" value="ECO:0000315"/>
    <property type="project" value="UniProtKB"/>
</dbReference>
<dbReference type="GO" id="GO:0006457">
    <property type="term" value="P:protein folding"/>
    <property type="evidence" value="ECO:0000315"/>
    <property type="project" value="MGI"/>
</dbReference>
<dbReference type="GO" id="GO:0061512">
    <property type="term" value="P:protein localization to cilium"/>
    <property type="evidence" value="ECO:0000315"/>
    <property type="project" value="MGI"/>
</dbReference>
<dbReference type="FunFam" id="6.10.140.2220:FF:000009">
    <property type="entry name" value="Zinc finger MYND domain-containing protein 10"/>
    <property type="match status" value="1"/>
</dbReference>
<dbReference type="Gene3D" id="6.10.140.2220">
    <property type="match status" value="1"/>
</dbReference>
<dbReference type="InterPro" id="IPR017333">
    <property type="entry name" value="UCP037948_Znf-MYND"/>
</dbReference>
<dbReference type="InterPro" id="IPR052298">
    <property type="entry name" value="ZMYND10"/>
</dbReference>
<dbReference type="InterPro" id="IPR002893">
    <property type="entry name" value="Znf_MYND"/>
</dbReference>
<dbReference type="PANTHER" id="PTHR13244">
    <property type="entry name" value="ZINC FINGER MYND DOMAIN CONTAINING PROTEIN 10"/>
    <property type="match status" value="1"/>
</dbReference>
<dbReference type="PANTHER" id="PTHR13244:SF7">
    <property type="entry name" value="ZINC FINGER MYND DOMAIN-CONTAINING PROTEIN 10"/>
    <property type="match status" value="1"/>
</dbReference>
<dbReference type="Pfam" id="PF01753">
    <property type="entry name" value="zf-MYND"/>
    <property type="match status" value="1"/>
</dbReference>
<dbReference type="PIRSF" id="PIRSF037948">
    <property type="entry name" value="UCP037948_Znf_MYND10"/>
    <property type="match status" value="1"/>
</dbReference>
<dbReference type="SUPFAM" id="SSF144232">
    <property type="entry name" value="HIT/MYND zinc finger-like"/>
    <property type="match status" value="1"/>
</dbReference>
<dbReference type="PROSITE" id="PS01360">
    <property type="entry name" value="ZF_MYND_1"/>
    <property type="match status" value="1"/>
</dbReference>
<dbReference type="PROSITE" id="PS50865">
    <property type="entry name" value="ZF_MYND_2"/>
    <property type="match status" value="1"/>
</dbReference>
<keyword id="KW-1003">Cell membrane</keyword>
<keyword id="KW-0963">Cytoplasm</keyword>
<keyword id="KW-0206">Cytoskeleton</keyword>
<keyword id="KW-0472">Membrane</keyword>
<keyword id="KW-0479">Metal-binding</keyword>
<keyword id="KW-1185">Reference proteome</keyword>
<keyword id="KW-0862">Zinc</keyword>
<keyword id="KW-0863">Zinc-finger</keyword>
<comment type="function">
    <text evidence="1 7">Plays a role in axonemal structure organization and motility (PubMed:29601588). Involved in axonemal pre-assembly of inner and outer dynein arms (IDA and ODA, respectively) for proper axoneme building for cilia motility (PubMed:29601588). May act by indirectly regulating transcription of dynein proteins (By similarity).</text>
</comment>
<comment type="subunit">
    <text evidence="2">Interacts (via C-terminus) with DNAAF11 (via CS domain); this interaction stabilizes DNAAF11 at the protein level. Interacts (via C-terminus) with DNAL1; this interaction stabilizes DNAL1 at the protein level. Interacts with DNAAF4, HSPA8, IQUB, RUVBL2 and DYNTL5.</text>
</comment>
<comment type="subcellular location">
    <subcellularLocation>
        <location evidence="4">Cytoplasm</location>
    </subcellularLocation>
    <subcellularLocation>
        <location evidence="4">Cytoplasm</location>
        <location evidence="4">Cytoskeleton</location>
        <location evidence="4">Microtubule organizing center</location>
        <location evidence="4">Centrosome</location>
        <location evidence="4">Centriolar satellite</location>
    </subcellularLocation>
    <subcellularLocation>
        <location evidence="7">Apical cell membrane</location>
    </subcellularLocation>
    <subcellularLocation>
        <location evidence="3">Dynein axonemal particle</location>
    </subcellularLocation>
</comment>
<comment type="tissue specificity">
    <text evidence="6 7">Expressed in the testis. Expressed in the tracheal epithelium (PubMed:29601588). Restricted to regions containing motile cilia (PubMed:23891471).</text>
</comment>
<comment type="developmental stage">
    <text evidence="6">Specifically expressed in the ciliated epithelial layer associated with nasal and lung epithelium in 18.5 dpc embryos.</text>
</comment>
<comment type="disruption phenotype">
    <text evidence="7">Mice neonates exhibit growth retardation dying within 1 month after birth. Show head deformation and situs invertus (heart apex, stomach, liver or spleen). Display lung lobular structures deterioration and collapsed alveolar spaces. Show mucosal congestion in paranasal cavities. Show loss of ciliary motility and axonemal outer and inner dynein arm (IDA and ODA, respectively) components without disruption of ciliogenesis.</text>
</comment>
<comment type="similarity">
    <text evidence="8">Belongs to the ZMYND10 family.</text>
</comment>